<dbReference type="EMBL" id="JQ067087">
    <property type="protein sequence ID" value="ALH23722.1"/>
    <property type="molecule type" value="Genomic_DNA"/>
</dbReference>
<dbReference type="RefSeq" id="YP_009196301.1">
    <property type="nucleotide sequence ID" value="NC_028770.1"/>
</dbReference>
<dbReference type="SMR" id="A0A0S0MX59"/>
<dbReference type="GeneID" id="26623526"/>
<dbReference type="KEGG" id="vg:26623526"/>
<dbReference type="OrthoDB" id="32376at10239"/>
<dbReference type="Proteomes" id="UP000204009">
    <property type="component" value="Genome"/>
</dbReference>
<dbReference type="GO" id="GO:0008999">
    <property type="term" value="F:protein-N-terminal-alanine acetyltransferase activity"/>
    <property type="evidence" value="ECO:0007669"/>
    <property type="project" value="TreeGrafter"/>
</dbReference>
<dbReference type="GO" id="GO:0099018">
    <property type="term" value="P:symbiont-mediated evasion of host restriction-modification system"/>
    <property type="evidence" value="ECO:0007669"/>
    <property type="project" value="UniProtKB-KW"/>
</dbReference>
<dbReference type="GO" id="GO:0052170">
    <property type="term" value="P:symbiont-mediated suppression of host innate immune response"/>
    <property type="evidence" value="ECO:0007669"/>
    <property type="project" value="UniProtKB-KW"/>
</dbReference>
<dbReference type="CDD" id="cd04301">
    <property type="entry name" value="NAT_SF"/>
    <property type="match status" value="1"/>
</dbReference>
<dbReference type="Gene3D" id="3.40.630.30">
    <property type="match status" value="1"/>
</dbReference>
<dbReference type="InterPro" id="IPR016181">
    <property type="entry name" value="Acyl_CoA_acyltransferase"/>
</dbReference>
<dbReference type="InterPro" id="IPR000182">
    <property type="entry name" value="GNAT_dom"/>
</dbReference>
<dbReference type="InterPro" id="IPR050276">
    <property type="entry name" value="MshD_Acetyltransferase"/>
</dbReference>
<dbReference type="PANTHER" id="PTHR43617">
    <property type="entry name" value="L-AMINO ACID N-ACETYLTRANSFERASE"/>
    <property type="match status" value="1"/>
</dbReference>
<dbReference type="PANTHER" id="PTHR43617:SF20">
    <property type="entry name" value="N-ALPHA-ACETYLTRANSFERASE RIMI"/>
    <property type="match status" value="1"/>
</dbReference>
<dbReference type="Pfam" id="PF00583">
    <property type="entry name" value="Acetyltransf_1"/>
    <property type="match status" value="1"/>
</dbReference>
<dbReference type="SUPFAM" id="SSF55729">
    <property type="entry name" value="Acyl-CoA N-acyltransferases (Nat)"/>
    <property type="match status" value="1"/>
</dbReference>
<dbReference type="PROSITE" id="PS51186">
    <property type="entry name" value="GNAT"/>
    <property type="match status" value="1"/>
</dbReference>
<organismHost>
    <name type="scientific">Pseudomonas aeruginosa</name>
    <dbReference type="NCBI Taxonomy" id="287"/>
</organismHost>
<protein>
    <recommendedName>
        <fullName evidence="3">5-NmdU N-acetyltransferase</fullName>
    </recommendedName>
</protein>
<accession>A0A0S0MX59</accession>
<gene>
    <name evidence="3" type="primary">gp48</name>
</gene>
<gene>
    <name evidence="5" type="ORF">PaMx11_48</name>
</gene>
<organism>
    <name type="scientific">Pseudomonas phage PaMx11</name>
    <dbReference type="NCBI Taxonomy" id="1175657"/>
    <lineage>
        <taxon>Viruses</taxon>
        <taxon>Duplodnaviria</taxon>
        <taxon>Heunggongvirae</taxon>
        <taxon>Uroviricota</taxon>
        <taxon>Caudoviricetes</taxon>
        <taxon>Mesyanzhinovviridae</taxon>
        <taxon>Bradleyvirinae</taxon>
        <taxon>Abidjanvirus</taxon>
        <taxon>Pseudomonas virus PaMx11</taxon>
    </lineage>
</organism>
<keyword id="KW-0012">Acyltransferase</keyword>
<keyword id="KW-0945">Host-virus interaction</keyword>
<keyword id="KW-1090">Inhibition of host innate immune response by virus</keyword>
<keyword id="KW-1185">Reference proteome</keyword>
<keyword id="KW-1258">Restriction-modification system evasion by virus</keyword>
<keyword id="KW-0808">Transferase</keyword>
<keyword id="KW-0899">Viral immunoevasion</keyword>
<feature type="chain" id="PRO_0000456280" description="5-NmdU N-acetyltransferase">
    <location>
        <begin position="1"/>
        <end position="140"/>
    </location>
</feature>
<feature type="domain" description="N-acetyltransferase" evidence="1">
    <location>
        <begin position="2"/>
        <end position="140"/>
    </location>
</feature>
<evidence type="ECO:0000255" key="1">
    <source>
        <dbReference type="PROSITE-ProRule" id="PRU00532"/>
    </source>
</evidence>
<evidence type="ECO:0000269" key="2">
    <source>
    </source>
</evidence>
<evidence type="ECO:0000303" key="3">
    <source>
    </source>
</evidence>
<evidence type="ECO:0000305" key="4"/>
<evidence type="ECO:0000312" key="5">
    <source>
        <dbReference type="EMBL" id="ALH23722.1"/>
    </source>
</evidence>
<sequence length="140" mass="15969">MIVVRKALPEEHKEILQVAKQSKYTKDFSNQVMFSSEAAYNKGWIHVAEHEGEIRGFYCIREKVRAPETVLYFIGVAQEAKGLGLGKKLIEHIMATTRHRRLTLNVNKQNEEARAFYDRLGFTVAGESLGGEGLALFKEW</sequence>
<reference key="1">
    <citation type="journal article" date="2012" name="Appl. Environ. Microbiol.">
        <title>High Diversity and Novel Species of Pseudomonas aeruginosa Bacteriophages.</title>
        <authorList>
            <person name="Sepulveda-Robles O."/>
            <person name="Kameyama L."/>
            <person name="Guarneros G."/>
        </authorList>
    </citation>
    <scope>NUCLEOTIDE SEQUENCE [LARGE SCALE GENOMIC DNA]</scope>
</reference>
<reference key="2">
    <citation type="journal article" date="2021" name="Nucleic Acids Res.">
        <title>Pathways of thymidine hypermodification.</title>
        <authorList>
            <person name="Lee Y.J."/>
            <person name="Dai N."/>
            <person name="Mueller S.I."/>
            <person name="Guan C."/>
            <person name="Parker M.J."/>
            <person name="Fraser M.E."/>
            <person name="Walsh S.E."/>
            <person name="Sridar J."/>
            <person name="Mulholland A."/>
            <person name="Nayak K."/>
            <person name="Sun Z."/>
            <person name="Lin Y.C."/>
            <person name="Comb D.G."/>
            <person name="Marks K."/>
            <person name="Gonzalez R."/>
            <person name="Dowling D.P."/>
            <person name="Bandarian V."/>
            <person name="Saleh L."/>
            <person name="Correa I.R."/>
            <person name="Weigele P.R."/>
        </authorList>
    </citation>
    <scope>FUNCTION</scope>
    <scope>CATALYTIC ACTIVITY</scope>
</reference>
<proteinExistence type="evidence at protein level"/>
<name>AT_BPPAM</name>
<comment type="function">
    <text evidence="2">Acetylates 5-aminomethyl-2'-deoxyuridine (5-NmdU) to produce 5-acetylaminomethyl-2'-deoxyuridine (5-AcNmdU) on DNA as a step in the pathway leading to thymidine hypermodifications in the viral genome (PubMed:34522950). As a final result of the pathway of hypermodification, 5-acetylaminomethyl-2'-deoxyuridine (5-AcNmdU) substitutes for a subset of thymidines in the viral DNA (PubMed:34522950). These modifications probably prevent degradation of viral genome by the host restriction-modification antiviral defense system (PubMed:34522950).</text>
</comment>
<comment type="catalytic activity">
    <reaction evidence="2">
        <text>5-aminomethyl-dUMP in DNA + acetyl-CoA = 5-acetylaminomethyl-dUMP in DNA + CoA + H(+)</text>
        <dbReference type="Rhea" id="RHEA:71563"/>
        <dbReference type="Rhea" id="RHEA-COMP:18044"/>
        <dbReference type="Rhea" id="RHEA-COMP:18048"/>
        <dbReference type="ChEBI" id="CHEBI:15378"/>
        <dbReference type="ChEBI" id="CHEBI:57287"/>
        <dbReference type="ChEBI" id="CHEBI:57288"/>
        <dbReference type="ChEBI" id="CHEBI:190926"/>
        <dbReference type="ChEBI" id="CHEBI:190928"/>
    </reaction>
</comment>
<comment type="similarity">
    <text evidence="4">Belongs to the acetyltransferase family.</text>
</comment>